<comment type="function">
    <text evidence="1">One of the primary rRNA binding proteins, it binds directly near the 3'-end of the 23S rRNA, where it nucleates assembly of the 50S subunit.</text>
</comment>
<comment type="subunit">
    <text evidence="1">Part of the 50S ribosomal subunit. Forms a cluster with proteins L14 and L19.</text>
</comment>
<comment type="PTM">
    <text evidence="1">Methylated by PrmB.</text>
</comment>
<comment type="similarity">
    <text evidence="1">Belongs to the universal ribosomal protein uL3 family.</text>
</comment>
<sequence>MIGLVGKKVGMTRIFTEDGVSIPVTVIEVEANRVTQVKDLANDGYRAVQVTTGAKKANRVTKPEAGHFAKAGVEAGRGLWEFRLAEGEEYTVGQSISVELFADVKKVDVTGTSKGKGFAGTVKRWNFRTQDATHGNSLSHRVPGSIGQNQTPGKVFKGKKMAGQMGNERVTVQSLDVVRVDAERNLLLVKGGVPGATGCDLIVKPAVKA</sequence>
<proteinExistence type="inferred from homology"/>
<dbReference type="EMBL" id="CP001144">
    <property type="protein sequence ID" value="ACH74988.1"/>
    <property type="molecule type" value="Genomic_DNA"/>
</dbReference>
<dbReference type="RefSeq" id="WP_000579838.1">
    <property type="nucleotide sequence ID" value="NC_011205.1"/>
</dbReference>
<dbReference type="SMR" id="B5FJL4"/>
<dbReference type="KEGG" id="sed:SeD_A3807"/>
<dbReference type="HOGENOM" id="CLU_044142_4_1_6"/>
<dbReference type="Proteomes" id="UP000008322">
    <property type="component" value="Chromosome"/>
</dbReference>
<dbReference type="GO" id="GO:0022625">
    <property type="term" value="C:cytosolic large ribosomal subunit"/>
    <property type="evidence" value="ECO:0007669"/>
    <property type="project" value="TreeGrafter"/>
</dbReference>
<dbReference type="GO" id="GO:0019843">
    <property type="term" value="F:rRNA binding"/>
    <property type="evidence" value="ECO:0007669"/>
    <property type="project" value="UniProtKB-UniRule"/>
</dbReference>
<dbReference type="GO" id="GO:0003735">
    <property type="term" value="F:structural constituent of ribosome"/>
    <property type="evidence" value="ECO:0007669"/>
    <property type="project" value="InterPro"/>
</dbReference>
<dbReference type="GO" id="GO:0006412">
    <property type="term" value="P:translation"/>
    <property type="evidence" value="ECO:0007669"/>
    <property type="project" value="UniProtKB-UniRule"/>
</dbReference>
<dbReference type="FunFam" id="2.40.30.10:FF:000004">
    <property type="entry name" value="50S ribosomal protein L3"/>
    <property type="match status" value="1"/>
</dbReference>
<dbReference type="FunFam" id="3.30.160.810:FF:000001">
    <property type="entry name" value="50S ribosomal protein L3"/>
    <property type="match status" value="1"/>
</dbReference>
<dbReference type="Gene3D" id="3.30.160.810">
    <property type="match status" value="1"/>
</dbReference>
<dbReference type="Gene3D" id="2.40.30.10">
    <property type="entry name" value="Translation factors"/>
    <property type="match status" value="1"/>
</dbReference>
<dbReference type="HAMAP" id="MF_01325_B">
    <property type="entry name" value="Ribosomal_uL3_B"/>
    <property type="match status" value="1"/>
</dbReference>
<dbReference type="InterPro" id="IPR000597">
    <property type="entry name" value="Ribosomal_uL3"/>
</dbReference>
<dbReference type="InterPro" id="IPR019927">
    <property type="entry name" value="Ribosomal_uL3_bac/org-type"/>
</dbReference>
<dbReference type="InterPro" id="IPR019926">
    <property type="entry name" value="Ribosomal_uL3_CS"/>
</dbReference>
<dbReference type="InterPro" id="IPR009000">
    <property type="entry name" value="Transl_B-barrel_sf"/>
</dbReference>
<dbReference type="NCBIfam" id="TIGR03625">
    <property type="entry name" value="L3_bact"/>
    <property type="match status" value="1"/>
</dbReference>
<dbReference type="PANTHER" id="PTHR11229">
    <property type="entry name" value="50S RIBOSOMAL PROTEIN L3"/>
    <property type="match status" value="1"/>
</dbReference>
<dbReference type="PANTHER" id="PTHR11229:SF16">
    <property type="entry name" value="LARGE RIBOSOMAL SUBUNIT PROTEIN UL3C"/>
    <property type="match status" value="1"/>
</dbReference>
<dbReference type="Pfam" id="PF00297">
    <property type="entry name" value="Ribosomal_L3"/>
    <property type="match status" value="1"/>
</dbReference>
<dbReference type="SUPFAM" id="SSF50447">
    <property type="entry name" value="Translation proteins"/>
    <property type="match status" value="1"/>
</dbReference>
<dbReference type="PROSITE" id="PS00474">
    <property type="entry name" value="RIBOSOMAL_L3"/>
    <property type="match status" value="1"/>
</dbReference>
<gene>
    <name evidence="1" type="primary">rplC</name>
    <name type="ordered locus">SeD_A3807</name>
</gene>
<keyword id="KW-0488">Methylation</keyword>
<keyword id="KW-0687">Ribonucleoprotein</keyword>
<keyword id="KW-0689">Ribosomal protein</keyword>
<keyword id="KW-0694">RNA-binding</keyword>
<keyword id="KW-0699">rRNA-binding</keyword>
<name>RL3_SALDC</name>
<organism>
    <name type="scientific">Salmonella dublin (strain CT_02021853)</name>
    <dbReference type="NCBI Taxonomy" id="439851"/>
    <lineage>
        <taxon>Bacteria</taxon>
        <taxon>Pseudomonadati</taxon>
        <taxon>Pseudomonadota</taxon>
        <taxon>Gammaproteobacteria</taxon>
        <taxon>Enterobacterales</taxon>
        <taxon>Enterobacteriaceae</taxon>
        <taxon>Salmonella</taxon>
    </lineage>
</organism>
<evidence type="ECO:0000255" key="1">
    <source>
        <dbReference type="HAMAP-Rule" id="MF_01325"/>
    </source>
</evidence>
<evidence type="ECO:0000305" key="2"/>
<reference key="1">
    <citation type="journal article" date="2011" name="J. Bacteriol.">
        <title>Comparative genomics of 28 Salmonella enterica isolates: evidence for CRISPR-mediated adaptive sublineage evolution.</title>
        <authorList>
            <person name="Fricke W.F."/>
            <person name="Mammel M.K."/>
            <person name="McDermott P.F."/>
            <person name="Tartera C."/>
            <person name="White D.G."/>
            <person name="Leclerc J.E."/>
            <person name="Ravel J."/>
            <person name="Cebula T.A."/>
        </authorList>
    </citation>
    <scope>NUCLEOTIDE SEQUENCE [LARGE SCALE GENOMIC DNA]</scope>
    <source>
        <strain>CT_02021853</strain>
    </source>
</reference>
<protein>
    <recommendedName>
        <fullName evidence="1">Large ribosomal subunit protein uL3</fullName>
    </recommendedName>
    <alternativeName>
        <fullName evidence="2">50S ribosomal protein L3</fullName>
    </alternativeName>
</protein>
<accession>B5FJL4</accession>
<feature type="chain" id="PRO_1000141913" description="Large ribosomal subunit protein uL3">
    <location>
        <begin position="1"/>
        <end position="209"/>
    </location>
</feature>
<feature type="modified residue" description="N5-methylglutamine" evidence="1">
    <location>
        <position position="150"/>
    </location>
</feature>